<proteinExistence type="inferred from homology"/>
<accession>Q50782</accession>
<accession>O27207</accession>
<evidence type="ECO:0000250" key="1"/>
<evidence type="ECO:0000305" key="2"/>
<reference key="1">
    <citation type="journal article" date="1989" name="Proc. Natl. Acad. Sci. U.S.A.">
        <title>A hydrogenase-linked gene in Methanobacterium thermoautotrophicum strain delta H encodes a polyferredoxin.</title>
        <authorList>
            <person name="Reeve J.N."/>
            <person name="Beckler G.S."/>
            <person name="Cram D.S."/>
            <person name="Hamilton P.T."/>
            <person name="Brown J.W."/>
            <person name="Krzycki J.A."/>
            <person name="Kolodziej A.F."/>
            <person name="Alex L."/>
            <person name="Orme-Johnson W.H."/>
            <person name="Walsh C.T."/>
        </authorList>
    </citation>
    <scope>NUCLEOTIDE SEQUENCE [GENOMIC DNA]</scope>
    <source>
        <strain>ATCC 29096 / DSM 1053 / JCM 10044 / NBRC 100330 / Delta H</strain>
    </source>
</reference>
<reference key="2">
    <citation type="journal article" date="1997" name="J. Bacteriol.">
        <title>Complete genome sequence of Methanobacterium thermoautotrophicum deltaH: functional analysis and comparative genomics.</title>
        <authorList>
            <person name="Smith D.R."/>
            <person name="Doucette-Stamm L.A."/>
            <person name="Deloughery C."/>
            <person name="Lee H.-M."/>
            <person name="Dubois J."/>
            <person name="Aldredge T."/>
            <person name="Bashirzadeh R."/>
            <person name="Blakely D."/>
            <person name="Cook R."/>
            <person name="Gilbert K."/>
            <person name="Harrison D."/>
            <person name="Hoang L."/>
            <person name="Keagle P."/>
            <person name="Lumm W."/>
            <person name="Pothier B."/>
            <person name="Qiu D."/>
            <person name="Spadafora R."/>
            <person name="Vicare R."/>
            <person name="Wang Y."/>
            <person name="Wierzbowski J."/>
            <person name="Gibson R."/>
            <person name="Jiwani N."/>
            <person name="Caruso A."/>
            <person name="Bush D."/>
            <person name="Safer H."/>
            <person name="Patwell D."/>
            <person name="Prabhakar S."/>
            <person name="McDougall S."/>
            <person name="Shimer G."/>
            <person name="Goyal A."/>
            <person name="Pietrovski S."/>
            <person name="Church G.M."/>
            <person name="Daniels C.J."/>
            <person name="Mao J.-I."/>
            <person name="Rice P."/>
            <person name="Noelling J."/>
            <person name="Reeve J.N."/>
        </authorList>
    </citation>
    <scope>NUCLEOTIDE SEQUENCE [LARGE SCALE GENOMIC DNA]</scope>
    <source>
        <strain>ATCC 29096 / DSM 1053 / JCM 10044 / NBRC 100330 / Delta H</strain>
    </source>
</reference>
<organism>
    <name type="scientific">Methanothermobacter thermautotrophicus (strain ATCC 29096 / DSM 1053 / JCM 10044 / NBRC 100330 / Delta H)</name>
    <name type="common">Methanobacterium thermoautotrophicum</name>
    <dbReference type="NCBI Taxonomy" id="187420"/>
    <lineage>
        <taxon>Archaea</taxon>
        <taxon>Methanobacteriati</taxon>
        <taxon>Methanobacteriota</taxon>
        <taxon>Methanomada group</taxon>
        <taxon>Methanobacteria</taxon>
        <taxon>Methanobacteriales</taxon>
        <taxon>Methanobacteriaceae</taxon>
        <taxon>Methanothermobacter</taxon>
    </lineage>
</organism>
<keyword id="KW-0560">Oxidoreductase</keyword>
<keyword id="KW-1185">Reference proteome</keyword>
<dbReference type="EC" id="1.12.99.-"/>
<dbReference type="EMBL" id="J04540">
    <property type="protein sequence ID" value="AAB02350.2"/>
    <property type="molecule type" value="Genomic_DNA"/>
</dbReference>
<dbReference type="EMBL" id="AE000666">
    <property type="protein sequence ID" value="AAB85624.1"/>
    <property type="molecule type" value="Genomic_DNA"/>
</dbReference>
<dbReference type="PIR" id="C30315">
    <property type="entry name" value="C30315"/>
</dbReference>
<dbReference type="PIR" id="D30315">
    <property type="entry name" value="D30315"/>
</dbReference>
<dbReference type="RefSeq" id="WP_010876759.1">
    <property type="nucleotide sequence ID" value="NC_000916.1"/>
</dbReference>
<dbReference type="SMR" id="Q50782"/>
<dbReference type="FunCoup" id="Q50782">
    <property type="interactions" value="70"/>
</dbReference>
<dbReference type="IntAct" id="Q50782">
    <property type="interactions" value="1"/>
</dbReference>
<dbReference type="STRING" id="187420.MTH_1135"/>
<dbReference type="PaxDb" id="187420-MTH_1135"/>
<dbReference type="EnsemblBacteria" id="AAB85624">
    <property type="protein sequence ID" value="AAB85624"/>
    <property type="gene ID" value="MTH_1135"/>
</dbReference>
<dbReference type="GeneID" id="1471543"/>
<dbReference type="GeneID" id="77403547"/>
<dbReference type="KEGG" id="mth:MTH_1135"/>
<dbReference type="PATRIC" id="fig|187420.15.peg.1112"/>
<dbReference type="HOGENOM" id="CLU_053270_0_0_2"/>
<dbReference type="InParanoid" id="Q50782"/>
<dbReference type="BioCyc" id="MetaCyc:MVHGMAUTO-MONOMER"/>
<dbReference type="Proteomes" id="UP000005223">
    <property type="component" value="Chromosome"/>
</dbReference>
<dbReference type="GO" id="GO:0051536">
    <property type="term" value="F:iron-sulfur cluster binding"/>
    <property type="evidence" value="ECO:0007669"/>
    <property type="project" value="InterPro"/>
</dbReference>
<dbReference type="GO" id="GO:0016491">
    <property type="term" value="F:oxidoreductase activity"/>
    <property type="evidence" value="ECO:0007669"/>
    <property type="project" value="UniProtKB-KW"/>
</dbReference>
<dbReference type="Gene3D" id="3.40.50.700">
    <property type="entry name" value="NADH:ubiquinone oxidoreductase-like, 20kDa subunit"/>
    <property type="match status" value="1"/>
</dbReference>
<dbReference type="InterPro" id="IPR051349">
    <property type="entry name" value="Hydrogenase_assoc-protein"/>
</dbReference>
<dbReference type="InterPro" id="IPR006137">
    <property type="entry name" value="NADH_UbQ_OxRdtase-like_20kDa"/>
</dbReference>
<dbReference type="InterPro" id="IPR037024">
    <property type="entry name" value="NiFe_Hase_small_N_sf"/>
</dbReference>
<dbReference type="PANTHER" id="PTHR42845">
    <property type="entry name" value="COENZYME F420-REDUCING HYDROGENASE, GAMMA SUBUNIT"/>
    <property type="match status" value="1"/>
</dbReference>
<dbReference type="PANTHER" id="PTHR42845:SF2">
    <property type="entry name" value="F420-NON-REDUCING HYDROGENASE VHU SUBUNIT G"/>
    <property type="match status" value="1"/>
</dbReference>
<dbReference type="Pfam" id="PF01058">
    <property type="entry name" value="Oxidored_q6"/>
    <property type="match status" value="1"/>
</dbReference>
<dbReference type="SUPFAM" id="SSF56770">
    <property type="entry name" value="HydA/Nqo6-like"/>
    <property type="match status" value="1"/>
</dbReference>
<sequence>MAEKIKIGTMWLGGCSGCHLSIADFHEKIIDVMEHADFEFSPVLMDTKYDEIPELDVVIIEGGIVNDENREFAEELREKAKFVISYGTCAVYGGIPGLRNLWDKDEVIEEAYINSITTPNEEGVIPSEDVPHLEGRVKPLGEVIDVDFEVPGCPPRSDVAAEAVMALLTGEEIELPETNLCEVCPREKPPEGLAMDFIKRQFEVGKPEDDLCLIPQGLICMGPATVSICGAECPSIAIPCRGCYGPTARVEDQGAKMISAIASDYKVEEDKTVDPEEVAEQLDDIVGTFYTFTLPAALIPMKIQKEGK</sequence>
<feature type="initiator methionine" description="Removed" evidence="1">
    <location>
        <position position="1"/>
    </location>
</feature>
<feature type="chain" id="PRO_0000204357" description="F420-non-reducing hydrogenase subunit G">
    <location>
        <begin position="2"/>
        <end position="308"/>
    </location>
</feature>
<feature type="sequence conflict" description="In Ref. 1; AAB02350." evidence="2" ref="1">
    <original>E</original>
    <variation>G</variation>
    <location>
        <position position="27"/>
    </location>
</feature>
<protein>
    <recommendedName>
        <fullName>F420-non-reducing hydrogenase subunit G</fullName>
        <ecNumber>1.12.99.-</ecNumber>
    </recommendedName>
    <alternativeName>
        <fullName>Methyl viologen-reducing hydrogenase subunit gamma</fullName>
        <shortName>MVH subunit G</shortName>
    </alternativeName>
</protein>
<comment type="function">
    <text evidence="1">Part of a complex that provides reducing equivalents for heterodisulfide reductase.</text>
</comment>
<comment type="subunit">
    <text evidence="1">The F420-non-reducing hydrogenase is composed of three subunits; MvhA, MvhD and MvhG. It forms a complex with the heterodisulfide reductase (hdr) (By similarity).</text>
</comment>
<comment type="similarity">
    <text evidence="2">Belongs to the [NiFe]/[NiFeSe] hydrogenase small subunit family.</text>
</comment>
<gene>
    <name type="primary">mvhG</name>
    <name type="ordered locus">MTH_1135</name>
</gene>
<name>MVHG_METTH</name>